<reference key="1">
    <citation type="submission" date="2008-06" db="EMBL/GenBank/DDBJ databases">
        <title>Complete sequence of Chlorobaculum parvum NCIB 8327.</title>
        <authorList>
            <consortium name="US DOE Joint Genome Institute"/>
            <person name="Lucas S."/>
            <person name="Copeland A."/>
            <person name="Lapidus A."/>
            <person name="Glavina del Rio T."/>
            <person name="Dalin E."/>
            <person name="Tice H."/>
            <person name="Bruce D."/>
            <person name="Goodwin L."/>
            <person name="Pitluck S."/>
            <person name="Schmutz J."/>
            <person name="Larimer F."/>
            <person name="Land M."/>
            <person name="Hauser L."/>
            <person name="Kyrpides N."/>
            <person name="Mikhailova N."/>
            <person name="Zhao F."/>
            <person name="Li T."/>
            <person name="Liu Z."/>
            <person name="Overmann J."/>
            <person name="Bryant D.A."/>
            <person name="Richardson P."/>
        </authorList>
    </citation>
    <scope>NUCLEOTIDE SEQUENCE [LARGE SCALE GENOMIC DNA]</scope>
    <source>
        <strain>DSM 263 / NCIMB 8327</strain>
    </source>
</reference>
<sequence length="350" mass="38969">MEERSMQKAGFLKEPIKHIGITKHNVVPMVEEMADMAFQARNLARAASIVDLMQKDKECAVILTLAGSLISAGLKQVIIDMLEHNMVDAIVSTGANIVDQDFFEALGFKHWKGSQFADDSELRELAIDRIYDTYIDEDELRVCDDTMAIIANSMQPGAYSSREFIVEMGKYIEEKGLDKNSIVYKAYEKGVPIFCPAFSDCSAGFGLVHHQWNNPDNHVSIDSVKDFRELTKIKIENDKTGIFMIGGGVPKNFTQDIVVAAEVLGYEDVSMHTYAVQITVADERDGALSGSTLKEASSWGKVDTVYEQMVFAEATVAMPLIAGYAYHKRNWEGRPERNFNAMLDAKPVNA</sequence>
<protein>
    <recommendedName>
        <fullName evidence="1">Deoxyhypusine synthase-like protein</fullName>
        <ecNumber evidence="1">2.5.-.-</ecNumber>
    </recommendedName>
</protein>
<proteinExistence type="inferred from homology"/>
<keyword id="KW-0808">Transferase</keyword>
<organism>
    <name type="scientific">Chlorobaculum parvum (strain DSM 263 / NCIMB 8327)</name>
    <name type="common">Chlorobium vibrioforme subsp. thiosulfatophilum</name>
    <dbReference type="NCBI Taxonomy" id="517417"/>
    <lineage>
        <taxon>Bacteria</taxon>
        <taxon>Pseudomonadati</taxon>
        <taxon>Chlorobiota</taxon>
        <taxon>Chlorobiia</taxon>
        <taxon>Chlorobiales</taxon>
        <taxon>Chlorobiaceae</taxon>
        <taxon>Chlorobaculum</taxon>
    </lineage>
</organism>
<feature type="chain" id="PRO_1000130883" description="Deoxyhypusine synthase-like protein">
    <location>
        <begin position="1"/>
        <end position="350"/>
    </location>
</feature>
<accession>B3QLU4</accession>
<dbReference type="EC" id="2.5.-.-" evidence="1"/>
<dbReference type="EMBL" id="CP001099">
    <property type="protein sequence ID" value="ACF12430.1"/>
    <property type="molecule type" value="Genomic_DNA"/>
</dbReference>
<dbReference type="RefSeq" id="WP_012503263.1">
    <property type="nucleotide sequence ID" value="NC_011027.1"/>
</dbReference>
<dbReference type="SMR" id="B3QLU4"/>
<dbReference type="STRING" id="517417.Cpar_2043"/>
<dbReference type="KEGG" id="cpc:Cpar_2043"/>
<dbReference type="eggNOG" id="COG1899">
    <property type="taxonomic scope" value="Bacteria"/>
</dbReference>
<dbReference type="HOGENOM" id="CLU_039781_1_0_10"/>
<dbReference type="OrthoDB" id="9771211at2"/>
<dbReference type="Proteomes" id="UP000008811">
    <property type="component" value="Chromosome"/>
</dbReference>
<dbReference type="GO" id="GO:0005737">
    <property type="term" value="C:cytoplasm"/>
    <property type="evidence" value="ECO:0007669"/>
    <property type="project" value="TreeGrafter"/>
</dbReference>
<dbReference type="GO" id="GO:0034038">
    <property type="term" value="F:deoxyhypusine synthase activity"/>
    <property type="evidence" value="ECO:0007669"/>
    <property type="project" value="TreeGrafter"/>
</dbReference>
<dbReference type="Gene3D" id="3.40.910.10">
    <property type="entry name" value="Deoxyhypusine synthase"/>
    <property type="match status" value="1"/>
</dbReference>
<dbReference type="HAMAP" id="MF_00640">
    <property type="entry name" value="DHS_like"/>
    <property type="match status" value="1"/>
</dbReference>
<dbReference type="InterPro" id="IPR002773">
    <property type="entry name" value="Deoxyhypusine_synthase"/>
</dbReference>
<dbReference type="InterPro" id="IPR023496">
    <property type="entry name" value="Deoxyhypusine_synthase-like"/>
</dbReference>
<dbReference type="InterPro" id="IPR036982">
    <property type="entry name" value="Deoxyhypusine_synthase_sf"/>
</dbReference>
<dbReference type="InterPro" id="IPR029035">
    <property type="entry name" value="DHS-like_NAD/FAD-binding_dom"/>
</dbReference>
<dbReference type="NCBIfam" id="NF002699">
    <property type="entry name" value="PRK02492.1"/>
    <property type="match status" value="1"/>
</dbReference>
<dbReference type="PANTHER" id="PTHR11703">
    <property type="entry name" value="DEOXYHYPUSINE SYNTHASE"/>
    <property type="match status" value="1"/>
</dbReference>
<dbReference type="PANTHER" id="PTHR11703:SF2">
    <property type="entry name" value="DEOXYHYPUSINE SYNTHASE-LIKE PROTEIN"/>
    <property type="match status" value="1"/>
</dbReference>
<dbReference type="Pfam" id="PF01916">
    <property type="entry name" value="DS"/>
    <property type="match status" value="1"/>
</dbReference>
<dbReference type="SUPFAM" id="SSF52467">
    <property type="entry name" value="DHS-like NAD/FAD-binding domain"/>
    <property type="match status" value="1"/>
</dbReference>
<comment type="similarity">
    <text evidence="1">Belongs to the deoxyhypusine synthase family.</text>
</comment>
<name>DHSL_CHLP8</name>
<gene>
    <name type="ordered locus">Cpar_2043</name>
</gene>
<evidence type="ECO:0000255" key="1">
    <source>
        <dbReference type="HAMAP-Rule" id="MF_00640"/>
    </source>
</evidence>